<evidence type="ECO:0000255" key="1">
    <source>
        <dbReference type="HAMAP-Rule" id="MF_01363"/>
    </source>
</evidence>
<evidence type="ECO:0000305" key="2"/>
<sequence>MYAVIKTGGKQYRVAAGEKIKVEQIPADVGSEITIDQVFMVGEGESVKIGTPVVSGATVTATVVSHGRHDKIKIFKMRRRKHYQKHQGHRQNYTELRIEAISA</sequence>
<proteinExistence type="inferred from homology"/>
<comment type="function">
    <text evidence="1">This protein binds to 23S rRNA in the presence of protein L20.</text>
</comment>
<comment type="subunit">
    <text evidence="1">Part of the 50S ribosomal subunit. Contacts protein L20.</text>
</comment>
<comment type="similarity">
    <text evidence="1">Belongs to the bacterial ribosomal protein bL21 family.</text>
</comment>
<dbReference type="EMBL" id="CR555306">
    <property type="protein sequence ID" value="CAI06565.1"/>
    <property type="molecule type" value="Genomic_DNA"/>
</dbReference>
<dbReference type="RefSeq" id="WP_011236298.1">
    <property type="nucleotide sequence ID" value="NC_006513.1"/>
</dbReference>
<dbReference type="SMR" id="Q5P7Z6"/>
<dbReference type="STRING" id="76114.ebB22"/>
<dbReference type="KEGG" id="eba:ebB22"/>
<dbReference type="eggNOG" id="COG0261">
    <property type="taxonomic scope" value="Bacteria"/>
</dbReference>
<dbReference type="HOGENOM" id="CLU_061463_3_2_4"/>
<dbReference type="OrthoDB" id="9813334at2"/>
<dbReference type="Proteomes" id="UP000006552">
    <property type="component" value="Chromosome"/>
</dbReference>
<dbReference type="GO" id="GO:0005737">
    <property type="term" value="C:cytoplasm"/>
    <property type="evidence" value="ECO:0007669"/>
    <property type="project" value="UniProtKB-ARBA"/>
</dbReference>
<dbReference type="GO" id="GO:1990904">
    <property type="term" value="C:ribonucleoprotein complex"/>
    <property type="evidence" value="ECO:0007669"/>
    <property type="project" value="UniProtKB-KW"/>
</dbReference>
<dbReference type="GO" id="GO:0005840">
    <property type="term" value="C:ribosome"/>
    <property type="evidence" value="ECO:0007669"/>
    <property type="project" value="UniProtKB-KW"/>
</dbReference>
<dbReference type="GO" id="GO:0019843">
    <property type="term" value="F:rRNA binding"/>
    <property type="evidence" value="ECO:0007669"/>
    <property type="project" value="UniProtKB-UniRule"/>
</dbReference>
<dbReference type="GO" id="GO:0003735">
    <property type="term" value="F:structural constituent of ribosome"/>
    <property type="evidence" value="ECO:0007669"/>
    <property type="project" value="InterPro"/>
</dbReference>
<dbReference type="GO" id="GO:0006412">
    <property type="term" value="P:translation"/>
    <property type="evidence" value="ECO:0007669"/>
    <property type="project" value="UniProtKB-UniRule"/>
</dbReference>
<dbReference type="HAMAP" id="MF_01363">
    <property type="entry name" value="Ribosomal_bL21"/>
    <property type="match status" value="1"/>
</dbReference>
<dbReference type="InterPro" id="IPR028909">
    <property type="entry name" value="bL21-like"/>
</dbReference>
<dbReference type="InterPro" id="IPR036164">
    <property type="entry name" value="bL21-like_sf"/>
</dbReference>
<dbReference type="InterPro" id="IPR001787">
    <property type="entry name" value="Ribosomal_bL21"/>
</dbReference>
<dbReference type="InterPro" id="IPR018258">
    <property type="entry name" value="Ribosomal_bL21_CS"/>
</dbReference>
<dbReference type="NCBIfam" id="TIGR00061">
    <property type="entry name" value="L21"/>
    <property type="match status" value="1"/>
</dbReference>
<dbReference type="PANTHER" id="PTHR21349">
    <property type="entry name" value="50S RIBOSOMAL PROTEIN L21"/>
    <property type="match status" value="1"/>
</dbReference>
<dbReference type="PANTHER" id="PTHR21349:SF0">
    <property type="entry name" value="LARGE RIBOSOMAL SUBUNIT PROTEIN BL21M"/>
    <property type="match status" value="1"/>
</dbReference>
<dbReference type="Pfam" id="PF00829">
    <property type="entry name" value="Ribosomal_L21p"/>
    <property type="match status" value="1"/>
</dbReference>
<dbReference type="SUPFAM" id="SSF141091">
    <property type="entry name" value="L21p-like"/>
    <property type="match status" value="1"/>
</dbReference>
<dbReference type="PROSITE" id="PS01169">
    <property type="entry name" value="RIBOSOMAL_L21"/>
    <property type="match status" value="1"/>
</dbReference>
<name>RL21_AROAE</name>
<reference key="1">
    <citation type="journal article" date="2005" name="Arch. Microbiol.">
        <title>The genome sequence of an anaerobic aromatic-degrading denitrifying bacterium, strain EbN1.</title>
        <authorList>
            <person name="Rabus R."/>
            <person name="Kube M."/>
            <person name="Heider J."/>
            <person name="Beck A."/>
            <person name="Heitmann K."/>
            <person name="Widdel F."/>
            <person name="Reinhardt R."/>
        </authorList>
    </citation>
    <scope>NUCLEOTIDE SEQUENCE [LARGE SCALE GENOMIC DNA]</scope>
    <source>
        <strain>DSM 19018 / LMG 30748 / EbN1</strain>
    </source>
</reference>
<protein>
    <recommendedName>
        <fullName evidence="1">Large ribosomal subunit protein bL21</fullName>
    </recommendedName>
    <alternativeName>
        <fullName evidence="2">50S ribosomal protein L21</fullName>
    </alternativeName>
</protein>
<organism>
    <name type="scientific">Aromatoleum aromaticum (strain DSM 19018 / LMG 30748 / EbN1)</name>
    <name type="common">Azoarcus sp. (strain EbN1)</name>
    <dbReference type="NCBI Taxonomy" id="76114"/>
    <lineage>
        <taxon>Bacteria</taxon>
        <taxon>Pseudomonadati</taxon>
        <taxon>Pseudomonadota</taxon>
        <taxon>Betaproteobacteria</taxon>
        <taxon>Rhodocyclales</taxon>
        <taxon>Rhodocyclaceae</taxon>
        <taxon>Aromatoleum</taxon>
    </lineage>
</organism>
<keyword id="KW-1185">Reference proteome</keyword>
<keyword id="KW-0687">Ribonucleoprotein</keyword>
<keyword id="KW-0689">Ribosomal protein</keyword>
<keyword id="KW-0694">RNA-binding</keyword>
<keyword id="KW-0699">rRNA-binding</keyword>
<feature type="chain" id="PRO_0000269274" description="Large ribosomal subunit protein bL21">
    <location>
        <begin position="1"/>
        <end position="103"/>
    </location>
</feature>
<gene>
    <name evidence="1" type="primary">rplU</name>
    <name type="ordered locus">AZOSEA04430</name>
    <name type="ORF">ebB22</name>
</gene>
<accession>Q5P7Z6</accession>